<organism>
    <name type="scientific">Streptococcus uberis (strain ATCC BAA-854 / 0140J)</name>
    <dbReference type="NCBI Taxonomy" id="218495"/>
    <lineage>
        <taxon>Bacteria</taxon>
        <taxon>Bacillati</taxon>
        <taxon>Bacillota</taxon>
        <taxon>Bacilli</taxon>
        <taxon>Lactobacillales</taxon>
        <taxon>Streptococcaceae</taxon>
        <taxon>Streptococcus</taxon>
    </lineage>
</organism>
<reference key="1">
    <citation type="journal article" date="2009" name="BMC Genomics">
        <title>Evidence for niche adaptation in the genome of the bovine pathogen Streptococcus uberis.</title>
        <authorList>
            <person name="Ward P.N."/>
            <person name="Holden M.T.G."/>
            <person name="Leigh J.A."/>
            <person name="Lennard N."/>
            <person name="Bignell A."/>
            <person name="Barron A."/>
            <person name="Clark L."/>
            <person name="Quail M.A."/>
            <person name="Woodward J."/>
            <person name="Barrell B.G."/>
            <person name="Egan S.A."/>
            <person name="Field T.R."/>
            <person name="Maskell D."/>
            <person name="Kehoe M."/>
            <person name="Dowson C.G."/>
            <person name="Chanter N."/>
            <person name="Whatmore A.M."/>
            <person name="Bentley S.D."/>
            <person name="Parkhill J."/>
        </authorList>
    </citation>
    <scope>NUCLEOTIDE SEQUENCE [LARGE SCALE GENOMIC DNA]</scope>
    <source>
        <strain>ATCC BAA-854 / 0140J</strain>
    </source>
</reference>
<comment type="function">
    <text evidence="1">Attaches a formyl group to the free amino group of methionyl-tRNA(fMet). The formyl group appears to play a dual role in the initiator identity of N-formylmethionyl-tRNA by promoting its recognition by IF2 and preventing the misappropriation of this tRNA by the elongation apparatus.</text>
</comment>
<comment type="catalytic activity">
    <reaction evidence="1">
        <text>L-methionyl-tRNA(fMet) + (6R)-10-formyltetrahydrofolate = N-formyl-L-methionyl-tRNA(fMet) + (6S)-5,6,7,8-tetrahydrofolate + H(+)</text>
        <dbReference type="Rhea" id="RHEA:24380"/>
        <dbReference type="Rhea" id="RHEA-COMP:9952"/>
        <dbReference type="Rhea" id="RHEA-COMP:9953"/>
        <dbReference type="ChEBI" id="CHEBI:15378"/>
        <dbReference type="ChEBI" id="CHEBI:57453"/>
        <dbReference type="ChEBI" id="CHEBI:78530"/>
        <dbReference type="ChEBI" id="CHEBI:78844"/>
        <dbReference type="ChEBI" id="CHEBI:195366"/>
        <dbReference type="EC" id="2.1.2.9"/>
    </reaction>
</comment>
<comment type="similarity">
    <text evidence="1">Belongs to the Fmt family.</text>
</comment>
<accession>B9DV45</accession>
<gene>
    <name evidence="1" type="primary">fmt</name>
    <name type="ordered locus">SUB1388</name>
</gene>
<dbReference type="EC" id="2.1.2.9" evidence="1"/>
<dbReference type="EMBL" id="AM946015">
    <property type="protein sequence ID" value="CAR43002.1"/>
    <property type="molecule type" value="Genomic_DNA"/>
</dbReference>
<dbReference type="RefSeq" id="WP_015911708.1">
    <property type="nucleotide sequence ID" value="NC_012004.1"/>
</dbReference>
<dbReference type="SMR" id="B9DV45"/>
<dbReference type="STRING" id="218495.SUB1388"/>
<dbReference type="GeneID" id="93826710"/>
<dbReference type="KEGG" id="sub:SUB1388"/>
<dbReference type="eggNOG" id="COG0223">
    <property type="taxonomic scope" value="Bacteria"/>
</dbReference>
<dbReference type="HOGENOM" id="CLU_033347_1_1_9"/>
<dbReference type="OrthoDB" id="9802815at2"/>
<dbReference type="Proteomes" id="UP000000449">
    <property type="component" value="Chromosome"/>
</dbReference>
<dbReference type="GO" id="GO:0005829">
    <property type="term" value="C:cytosol"/>
    <property type="evidence" value="ECO:0007669"/>
    <property type="project" value="TreeGrafter"/>
</dbReference>
<dbReference type="GO" id="GO:0004479">
    <property type="term" value="F:methionyl-tRNA formyltransferase activity"/>
    <property type="evidence" value="ECO:0007669"/>
    <property type="project" value="UniProtKB-UniRule"/>
</dbReference>
<dbReference type="CDD" id="cd08646">
    <property type="entry name" value="FMT_core_Met-tRNA-FMT_N"/>
    <property type="match status" value="1"/>
</dbReference>
<dbReference type="CDD" id="cd08704">
    <property type="entry name" value="Met_tRNA_FMT_C"/>
    <property type="match status" value="1"/>
</dbReference>
<dbReference type="FunFam" id="3.40.50.170:FF:000004">
    <property type="entry name" value="Methionyl-tRNA formyltransferase"/>
    <property type="match status" value="1"/>
</dbReference>
<dbReference type="Gene3D" id="3.10.25.10">
    <property type="entry name" value="Formyl transferase, C-terminal domain"/>
    <property type="match status" value="1"/>
</dbReference>
<dbReference type="Gene3D" id="3.40.50.170">
    <property type="entry name" value="Formyl transferase, N-terminal domain"/>
    <property type="match status" value="1"/>
</dbReference>
<dbReference type="HAMAP" id="MF_00182">
    <property type="entry name" value="Formyl_trans"/>
    <property type="match status" value="1"/>
</dbReference>
<dbReference type="InterPro" id="IPR005794">
    <property type="entry name" value="Fmt"/>
</dbReference>
<dbReference type="InterPro" id="IPR005793">
    <property type="entry name" value="Formyl_trans_C"/>
</dbReference>
<dbReference type="InterPro" id="IPR037022">
    <property type="entry name" value="Formyl_trans_C_sf"/>
</dbReference>
<dbReference type="InterPro" id="IPR002376">
    <property type="entry name" value="Formyl_transf_N"/>
</dbReference>
<dbReference type="InterPro" id="IPR036477">
    <property type="entry name" value="Formyl_transf_N_sf"/>
</dbReference>
<dbReference type="InterPro" id="IPR011034">
    <property type="entry name" value="Formyl_transferase-like_C_sf"/>
</dbReference>
<dbReference type="InterPro" id="IPR001555">
    <property type="entry name" value="GART_AS"/>
</dbReference>
<dbReference type="InterPro" id="IPR044135">
    <property type="entry name" value="Met-tRNA-FMT_C"/>
</dbReference>
<dbReference type="InterPro" id="IPR041711">
    <property type="entry name" value="Met-tRNA-FMT_N"/>
</dbReference>
<dbReference type="NCBIfam" id="TIGR00460">
    <property type="entry name" value="fmt"/>
    <property type="match status" value="1"/>
</dbReference>
<dbReference type="PANTHER" id="PTHR11138">
    <property type="entry name" value="METHIONYL-TRNA FORMYLTRANSFERASE"/>
    <property type="match status" value="1"/>
</dbReference>
<dbReference type="PANTHER" id="PTHR11138:SF5">
    <property type="entry name" value="METHIONYL-TRNA FORMYLTRANSFERASE, MITOCHONDRIAL"/>
    <property type="match status" value="1"/>
</dbReference>
<dbReference type="Pfam" id="PF02911">
    <property type="entry name" value="Formyl_trans_C"/>
    <property type="match status" value="1"/>
</dbReference>
<dbReference type="Pfam" id="PF00551">
    <property type="entry name" value="Formyl_trans_N"/>
    <property type="match status" value="1"/>
</dbReference>
<dbReference type="SUPFAM" id="SSF50486">
    <property type="entry name" value="FMT C-terminal domain-like"/>
    <property type="match status" value="1"/>
</dbReference>
<dbReference type="SUPFAM" id="SSF53328">
    <property type="entry name" value="Formyltransferase"/>
    <property type="match status" value="1"/>
</dbReference>
<dbReference type="PROSITE" id="PS00373">
    <property type="entry name" value="GART"/>
    <property type="match status" value="1"/>
</dbReference>
<proteinExistence type="inferred from homology"/>
<sequence length="311" mass="33936">MTKIIFMGTPDFSATVLKGLIENPSYQLLAVVTQPDRAVGRKKEIKMSPVKEVALEHHIPVYQPEKLSGSQELESIMSLDADGIVTAAFGQFLPTKLLDSVTFAVNVHASLLPKYRGGAPIHYALINGEEEAGVTIMEMVKEMDAGDMIAKASTPILEDDNVGTMFDKLAILGRDLLIKTLPDYLSGQLKPVAQNHAEATFSPNITSEQEKLDFTKSARAIFNQVRGMNPWPIAHTYFNGERFKIYELLAIEGQGAPGQVIEKTKDSLIVATGSGAVSLRVVQPSGKPKMTIKDYLNGLGRDIKVGDYFGQ</sequence>
<protein>
    <recommendedName>
        <fullName evidence="1">Methionyl-tRNA formyltransferase</fullName>
        <ecNumber evidence="1">2.1.2.9</ecNumber>
    </recommendedName>
</protein>
<name>FMT_STRU0</name>
<feature type="chain" id="PRO_1000190048" description="Methionyl-tRNA formyltransferase">
    <location>
        <begin position="1"/>
        <end position="311"/>
    </location>
</feature>
<feature type="binding site" evidence="1">
    <location>
        <begin position="110"/>
        <end position="113"/>
    </location>
    <ligand>
        <name>(6S)-5,6,7,8-tetrahydrofolate</name>
        <dbReference type="ChEBI" id="CHEBI:57453"/>
    </ligand>
</feature>
<evidence type="ECO:0000255" key="1">
    <source>
        <dbReference type="HAMAP-Rule" id="MF_00182"/>
    </source>
</evidence>
<keyword id="KW-0648">Protein biosynthesis</keyword>
<keyword id="KW-1185">Reference proteome</keyword>
<keyword id="KW-0808">Transferase</keyword>